<reference key="1">
    <citation type="journal article" date="1999" name="Nature">
        <title>Sequence and analysis of chromosome 2 of the plant Arabidopsis thaliana.</title>
        <authorList>
            <person name="Lin X."/>
            <person name="Kaul S."/>
            <person name="Rounsley S.D."/>
            <person name="Shea T.P."/>
            <person name="Benito M.-I."/>
            <person name="Town C.D."/>
            <person name="Fujii C.Y."/>
            <person name="Mason T.M."/>
            <person name="Bowman C.L."/>
            <person name="Barnstead M.E."/>
            <person name="Feldblyum T.V."/>
            <person name="Buell C.R."/>
            <person name="Ketchum K.A."/>
            <person name="Lee J.J."/>
            <person name="Ronning C.M."/>
            <person name="Koo H.L."/>
            <person name="Moffat K.S."/>
            <person name="Cronin L.A."/>
            <person name="Shen M."/>
            <person name="Pai G."/>
            <person name="Van Aken S."/>
            <person name="Umayam L."/>
            <person name="Tallon L.J."/>
            <person name="Gill J.E."/>
            <person name="Adams M.D."/>
            <person name="Carrera A.J."/>
            <person name="Creasy T.H."/>
            <person name="Goodman H.M."/>
            <person name="Somerville C.R."/>
            <person name="Copenhaver G.P."/>
            <person name="Preuss D."/>
            <person name="Nierman W.C."/>
            <person name="White O."/>
            <person name="Eisen J.A."/>
            <person name="Salzberg S.L."/>
            <person name="Fraser C.M."/>
            <person name="Venter J.C."/>
        </authorList>
    </citation>
    <scope>NUCLEOTIDE SEQUENCE [LARGE SCALE GENOMIC DNA]</scope>
    <source>
        <strain>cv. Columbia</strain>
    </source>
</reference>
<reference key="2">
    <citation type="journal article" date="2017" name="Plant J.">
        <title>Araport11: a complete reannotation of the Arabidopsis thaliana reference genome.</title>
        <authorList>
            <person name="Cheng C.Y."/>
            <person name="Krishnakumar V."/>
            <person name="Chan A.P."/>
            <person name="Thibaud-Nissen F."/>
            <person name="Schobel S."/>
            <person name="Town C.D."/>
        </authorList>
    </citation>
    <scope>GENOME REANNOTATION</scope>
    <source>
        <strain>cv. Columbia</strain>
    </source>
</reference>
<reference key="3">
    <citation type="journal article" date="1992" name="Plant Mol. Biol.">
        <title>Novel protein kinase of Arabidopsis thaliana (APK1) that phosphorylates tyrosine, serine and threonine.</title>
        <authorList>
            <person name="Hirayama T."/>
            <person name="Oka A."/>
        </authorList>
    </citation>
    <scope>NUCLEOTIDE SEQUENCE [MRNA] OF 143-346</scope>
    <source>
        <strain>cv. Columbia</strain>
    </source>
</reference>
<reference key="4">
    <citation type="journal article" date="2010" name="Cell Host Microbe">
        <title>Receptor-like cytoplasmic kinases integrate signaling from multiple plant immune receptors and are targeted by a Pseudomonas syringae effector.</title>
        <authorList>
            <person name="Zhang J."/>
            <person name="Li W."/>
            <person name="Xiang T."/>
            <person name="Liu Z."/>
            <person name="Laluk K."/>
            <person name="Ding X."/>
            <person name="Zou Y."/>
            <person name="Gao M."/>
            <person name="Zhang X."/>
            <person name="Chen S."/>
            <person name="Mengiste T."/>
            <person name="Zhang Y."/>
            <person name="Zhou J.M."/>
        </authorList>
    </citation>
    <scope>GENE FAMILY</scope>
    <scope>NOMENCLATURE</scope>
</reference>
<reference key="5">
    <citation type="journal article" date="2013" name="PLoS ONE">
        <title>xopAC-triggered immunity against Xanthomonas depends on Arabidopsis receptor-like cytoplasmic kinase genes PBL2 and RIPK.</title>
        <authorList>
            <person name="Guy E."/>
            <person name="Lautier M."/>
            <person name="Chabannes M."/>
            <person name="Roux B."/>
            <person name="Lauber E."/>
            <person name="Arlat M."/>
            <person name="Noel L.D."/>
        </authorList>
    </citation>
    <scope>INTERACTION WITH XANTHOMONAS CAMPESTRIS XOPAC/AVRAC</scope>
</reference>
<reference key="6">
    <citation type="journal article" date="2014" name="PLoS ONE">
        <title>Light-induced stomatal opening is affected by the guard cell protein kinase APK1b.</title>
        <authorList>
            <person name="Elhaddad N.S."/>
            <person name="Hunt L."/>
            <person name="Sloan J."/>
            <person name="Gray J.E."/>
        </authorList>
    </citation>
    <scope>FUNCTION</scope>
    <scope>TISSUE SPECIFICITY</scope>
    <scope>DISRUPTION PHENOTYPE</scope>
</reference>
<feature type="initiator methionine" description="Removed" evidence="11">
    <location>
        <position position="1"/>
    </location>
</feature>
<feature type="chain" id="PRO_0000024303" description="Probable serine/threonine-protein kinase PBL10">
    <location>
        <begin position="2"/>
        <end position="412"/>
    </location>
</feature>
<feature type="domain" description="Protein kinase" evidence="4">
    <location>
        <begin position="69"/>
        <end position="356"/>
    </location>
</feature>
<feature type="region of interest" description="Disordered" evidence="5">
    <location>
        <begin position="15"/>
        <end position="45"/>
    </location>
</feature>
<feature type="compositionally biased region" description="Polar residues" evidence="5">
    <location>
        <begin position="23"/>
        <end position="43"/>
    </location>
</feature>
<feature type="active site" description="Proton acceptor" evidence="4">
    <location>
        <position position="204"/>
    </location>
</feature>
<feature type="binding site" evidence="4">
    <location>
        <begin position="75"/>
        <end position="83"/>
    </location>
    <ligand>
        <name>ATP</name>
        <dbReference type="ChEBI" id="CHEBI:30616"/>
    </ligand>
</feature>
<feature type="binding site" evidence="4">
    <location>
        <position position="107"/>
    </location>
    <ligand>
        <name>ATP</name>
        <dbReference type="ChEBI" id="CHEBI:30616"/>
    </ligand>
</feature>
<feature type="modified residue" description="Phosphothreonine" evidence="1">
    <location>
        <position position="58"/>
    </location>
</feature>
<feature type="modified residue" description="Phosphotyrosine" evidence="1">
    <location>
        <position position="152"/>
    </location>
</feature>
<feature type="modified residue" description="Phosphoserine" evidence="1">
    <location>
        <position position="208"/>
    </location>
</feature>
<feature type="modified residue" description="Phosphoserine" evidence="1">
    <location>
        <position position="238"/>
    </location>
</feature>
<feature type="modified residue" description="Phosphothreonine" evidence="1">
    <location>
        <position position="239"/>
    </location>
</feature>
<feature type="modified residue" description="Phosphothreonine" evidence="1">
    <location>
        <position position="244"/>
    </location>
</feature>
<feature type="modified residue" description="Phosphotyrosine" evidence="1">
    <location>
        <position position="252"/>
    </location>
</feature>
<feature type="lipid moiety-binding region" description="N-myristoyl glycine" evidence="3">
    <location>
        <position position="2"/>
    </location>
</feature>
<feature type="lipid moiety-binding region" description="S-palmitoyl cysteine" evidence="3">
    <location>
        <position position="4"/>
    </location>
</feature>
<organism>
    <name type="scientific">Arabidopsis thaliana</name>
    <name type="common">Mouse-ear cress</name>
    <dbReference type="NCBI Taxonomy" id="3702"/>
    <lineage>
        <taxon>Eukaryota</taxon>
        <taxon>Viridiplantae</taxon>
        <taxon>Streptophyta</taxon>
        <taxon>Embryophyta</taxon>
        <taxon>Tracheophyta</taxon>
        <taxon>Spermatophyta</taxon>
        <taxon>Magnoliopsida</taxon>
        <taxon>eudicotyledons</taxon>
        <taxon>Gunneridae</taxon>
        <taxon>Pentapetalae</taxon>
        <taxon>rosids</taxon>
        <taxon>malvids</taxon>
        <taxon>Brassicales</taxon>
        <taxon>Brassicaceae</taxon>
        <taxon>Camelineae</taxon>
        <taxon>Arabidopsis</taxon>
    </lineage>
</organism>
<dbReference type="EC" id="2.7.11.1" evidence="11"/>
<dbReference type="EMBL" id="AC005315">
    <property type="protein sequence ID" value="AAC33221.1"/>
    <property type="molecule type" value="Genomic_DNA"/>
</dbReference>
<dbReference type="EMBL" id="AC005727">
    <property type="protein sequence ID" value="AAM15075.1"/>
    <property type="molecule type" value="Genomic_DNA"/>
</dbReference>
<dbReference type="EMBL" id="CP002685">
    <property type="protein sequence ID" value="AEC08190.1"/>
    <property type="molecule type" value="Genomic_DNA"/>
</dbReference>
<dbReference type="EMBL" id="D10152">
    <property type="protein sequence ID" value="BAA20968.1"/>
    <property type="molecule type" value="mRNA"/>
</dbReference>
<dbReference type="PIR" id="T02725">
    <property type="entry name" value="T02725"/>
</dbReference>
<dbReference type="RefSeq" id="NP_001031439.1">
    <molecule id="P46573-1"/>
    <property type="nucleotide sequence ID" value="NM_001036362.3"/>
</dbReference>
<dbReference type="SMR" id="P46573"/>
<dbReference type="BioGRID" id="2792">
    <property type="interactions" value="2"/>
</dbReference>
<dbReference type="FunCoup" id="P46573">
    <property type="interactions" value="3157"/>
</dbReference>
<dbReference type="IntAct" id="P46573">
    <property type="interactions" value="1"/>
</dbReference>
<dbReference type="STRING" id="3702.P46573"/>
<dbReference type="iPTMnet" id="P46573"/>
<dbReference type="PaxDb" id="3702-AT2G28930.1"/>
<dbReference type="ProteomicsDB" id="236796">
    <molecule id="P46573-1"/>
</dbReference>
<dbReference type="EnsemblPlants" id="AT2G28930.2">
    <molecule id="P46573-1"/>
    <property type="protein sequence ID" value="AT2G28930.2"/>
    <property type="gene ID" value="AT2G28930"/>
</dbReference>
<dbReference type="GeneID" id="817442"/>
<dbReference type="Gramene" id="AT2G28930.2">
    <molecule id="P46573-1"/>
    <property type="protein sequence ID" value="AT2G28930.2"/>
    <property type="gene ID" value="AT2G28930"/>
</dbReference>
<dbReference type="KEGG" id="ath:AT2G28930"/>
<dbReference type="Araport" id="AT2G28930"/>
<dbReference type="TAIR" id="AT2G28930">
    <property type="gene designation" value="PK1B"/>
</dbReference>
<dbReference type="eggNOG" id="KOG1187">
    <property type="taxonomic scope" value="Eukaryota"/>
</dbReference>
<dbReference type="HOGENOM" id="CLU_000288_21_1_1"/>
<dbReference type="InParanoid" id="P46573"/>
<dbReference type="OMA" id="KAESPCN"/>
<dbReference type="OrthoDB" id="4062651at2759"/>
<dbReference type="PhylomeDB" id="P46573"/>
<dbReference type="BRENDA" id="2.7.10.2">
    <property type="organism ID" value="399"/>
</dbReference>
<dbReference type="PRO" id="PR:P46573"/>
<dbReference type="Proteomes" id="UP000006548">
    <property type="component" value="Chromosome 2"/>
</dbReference>
<dbReference type="ExpressionAtlas" id="P46573">
    <property type="expression patterns" value="baseline and differential"/>
</dbReference>
<dbReference type="GO" id="GO:0005886">
    <property type="term" value="C:plasma membrane"/>
    <property type="evidence" value="ECO:0007669"/>
    <property type="project" value="UniProtKB-SubCell"/>
</dbReference>
<dbReference type="GO" id="GO:0005524">
    <property type="term" value="F:ATP binding"/>
    <property type="evidence" value="ECO:0007669"/>
    <property type="project" value="UniProtKB-KW"/>
</dbReference>
<dbReference type="GO" id="GO:0106310">
    <property type="term" value="F:protein serine kinase activity"/>
    <property type="evidence" value="ECO:0007669"/>
    <property type="project" value="RHEA"/>
</dbReference>
<dbReference type="GO" id="GO:0004674">
    <property type="term" value="F:protein serine/threonine kinase activity"/>
    <property type="evidence" value="ECO:0007669"/>
    <property type="project" value="UniProtKB-KW"/>
</dbReference>
<dbReference type="GO" id="GO:0004713">
    <property type="term" value="F:protein tyrosine kinase activity"/>
    <property type="evidence" value="ECO:0007669"/>
    <property type="project" value="UniProtKB-KW"/>
</dbReference>
<dbReference type="GO" id="GO:0006952">
    <property type="term" value="P:defense response"/>
    <property type="evidence" value="ECO:0007669"/>
    <property type="project" value="UniProtKB-KW"/>
</dbReference>
<dbReference type="GO" id="GO:1902458">
    <property type="term" value="P:positive regulation of stomatal opening"/>
    <property type="evidence" value="ECO:0000315"/>
    <property type="project" value="UniProtKB"/>
</dbReference>
<dbReference type="CDD" id="cd14066">
    <property type="entry name" value="STKc_IRAK"/>
    <property type="match status" value="1"/>
</dbReference>
<dbReference type="FunFam" id="1.10.510.10:FF:000258">
    <property type="entry name" value="Probable serine/threonine-protein kinase PBL8"/>
    <property type="match status" value="1"/>
</dbReference>
<dbReference type="FunFam" id="3.30.200.20:FF:000228">
    <property type="entry name" value="Serine/threonine-protein kinase BIK1"/>
    <property type="match status" value="1"/>
</dbReference>
<dbReference type="Gene3D" id="3.30.200.20">
    <property type="entry name" value="Phosphorylase Kinase, domain 1"/>
    <property type="match status" value="1"/>
</dbReference>
<dbReference type="Gene3D" id="1.10.510.10">
    <property type="entry name" value="Transferase(Phosphotransferase) domain 1"/>
    <property type="match status" value="1"/>
</dbReference>
<dbReference type="InterPro" id="IPR011009">
    <property type="entry name" value="Kinase-like_dom_sf"/>
</dbReference>
<dbReference type="InterPro" id="IPR050823">
    <property type="entry name" value="Plant_Ser_Thr_Prot_Kinase"/>
</dbReference>
<dbReference type="InterPro" id="IPR000719">
    <property type="entry name" value="Prot_kinase_dom"/>
</dbReference>
<dbReference type="InterPro" id="IPR017441">
    <property type="entry name" value="Protein_kinase_ATP_BS"/>
</dbReference>
<dbReference type="InterPro" id="IPR001245">
    <property type="entry name" value="Ser-Thr/Tyr_kinase_cat_dom"/>
</dbReference>
<dbReference type="InterPro" id="IPR008271">
    <property type="entry name" value="Ser/Thr_kinase_AS"/>
</dbReference>
<dbReference type="PANTHER" id="PTHR45621">
    <property type="entry name" value="OS01G0588500 PROTEIN-RELATED"/>
    <property type="match status" value="1"/>
</dbReference>
<dbReference type="Pfam" id="PF07714">
    <property type="entry name" value="PK_Tyr_Ser-Thr"/>
    <property type="match status" value="1"/>
</dbReference>
<dbReference type="SUPFAM" id="SSF56112">
    <property type="entry name" value="Protein kinase-like (PK-like)"/>
    <property type="match status" value="1"/>
</dbReference>
<dbReference type="PROSITE" id="PS00107">
    <property type="entry name" value="PROTEIN_KINASE_ATP"/>
    <property type="match status" value="1"/>
</dbReference>
<dbReference type="PROSITE" id="PS50011">
    <property type="entry name" value="PROTEIN_KINASE_DOM"/>
    <property type="match status" value="1"/>
</dbReference>
<dbReference type="PROSITE" id="PS00108">
    <property type="entry name" value="PROTEIN_KINASE_ST"/>
    <property type="match status" value="1"/>
</dbReference>
<proteinExistence type="evidence at protein level"/>
<accession>P46573</accession>
<accession>Q7GAG3</accession>
<accession>Q9SLH5</accession>
<keyword id="KW-0025">Alternative splicing</keyword>
<keyword id="KW-0067">ATP-binding</keyword>
<keyword id="KW-1003">Cell membrane</keyword>
<keyword id="KW-0418">Kinase</keyword>
<keyword id="KW-0449">Lipoprotein</keyword>
<keyword id="KW-0472">Membrane</keyword>
<keyword id="KW-0519">Myristate</keyword>
<keyword id="KW-0547">Nucleotide-binding</keyword>
<keyword id="KW-0564">Palmitate</keyword>
<keyword id="KW-0597">Phosphoprotein</keyword>
<keyword id="KW-0611">Plant defense</keyword>
<keyword id="KW-1185">Reference proteome</keyword>
<keyword id="KW-0723">Serine/threonine-protein kinase</keyword>
<keyword id="KW-0808">Transferase</keyword>
<keyword id="KW-0809">Transit peptide</keyword>
<keyword id="KW-0829">Tyrosine-protein kinase</keyword>
<sequence>MGICLSAQIKAVSPGASPKYMSSEANDSLGSKSSSVSIRTNPRTEGEILQSPNLKSFTFAELKAATRNFRPDSVLGEGGFGSVFKGWIDEQTLTASKPGTGVVIAVKKLNQDGWQGHQEWLAEVNYLGQFSHPNLVKLIGYCLEDEHRLLVYEFMPRGSLENHLFRRGSYFQPLSWTLRLKVALGAAKGLAFLHNAETSVIYRDFKTSNILLDSEYNAKLSDFGLAKDGPTGDKSHVSTRIMGTYGYAAPEYLATGHLTTKSDVYSYGVVLLEVLSGRRAVDKNRPPGEQKLVEWARPLLANKRKLFRVIDNRLQDQYSMEEACKVATLALRCLTFEIKLRPNMNEVVSHLEHIQTLNEAGGRNIDMVQRRMRRRSDSVAINQKPNAGFARQTAVGVIATAYPRPSDSPLFV</sequence>
<protein>
    <recommendedName>
        <fullName evidence="11">Probable serine/threonine-protein kinase PBL10</fullName>
        <ecNumber evidence="11">2.7.11.1</ecNumber>
    </recommendedName>
    <alternativeName>
        <fullName evidence="9">PBS1-like protein 10</fullName>
    </alternativeName>
    <alternativeName>
        <fullName evidence="11">Protein kinase 1B</fullName>
    </alternativeName>
</protein>
<evidence type="ECO:0000250" key="1">
    <source>
        <dbReference type="UniProtKB" id="O48814"/>
    </source>
</evidence>
<evidence type="ECO:0000250" key="2">
    <source>
        <dbReference type="UniProtKB" id="Q06548"/>
    </source>
</evidence>
<evidence type="ECO:0000250" key="3">
    <source>
        <dbReference type="UniProtKB" id="Q9FE20"/>
    </source>
</evidence>
<evidence type="ECO:0000255" key="4">
    <source>
        <dbReference type="PROSITE-ProRule" id="PRU00159"/>
    </source>
</evidence>
<evidence type="ECO:0000256" key="5">
    <source>
        <dbReference type="SAM" id="MobiDB-lite"/>
    </source>
</evidence>
<evidence type="ECO:0000269" key="6">
    <source>
    </source>
</evidence>
<evidence type="ECO:0000269" key="7">
    <source>
    </source>
</evidence>
<evidence type="ECO:0000303" key="8">
    <source>
    </source>
</evidence>
<evidence type="ECO:0000303" key="9">
    <source>
    </source>
</evidence>
<evidence type="ECO:0000303" key="10">
    <source>
    </source>
</evidence>
<evidence type="ECO:0000305" key="11"/>
<gene>
    <name evidence="9" type="primary">PBL10</name>
    <name evidence="8" type="synonym">APK1B</name>
    <name evidence="10" type="synonym">PIX16</name>
    <name type="ordered locus">At2g28930</name>
    <name type="ORF">T9I4.1</name>
</gene>
<name>PBL10_ARATH</name>
<comment type="function">
    <text evidence="1 2 7">Possible bi-functional kinase. In vitro, it exhibits serine/threonine activity. In vivo, can phosphorylate tyrosine residues of limited substrates (By similarity). May be involved in plant defense signaling (By similarity). Required for full light-induced stomatal opening (PubMed:24828466).</text>
</comment>
<comment type="catalytic activity">
    <reaction evidence="11">
        <text>L-seryl-[protein] + ATP = O-phospho-L-seryl-[protein] + ADP + H(+)</text>
        <dbReference type="Rhea" id="RHEA:17989"/>
        <dbReference type="Rhea" id="RHEA-COMP:9863"/>
        <dbReference type="Rhea" id="RHEA-COMP:11604"/>
        <dbReference type="ChEBI" id="CHEBI:15378"/>
        <dbReference type="ChEBI" id="CHEBI:29999"/>
        <dbReference type="ChEBI" id="CHEBI:30616"/>
        <dbReference type="ChEBI" id="CHEBI:83421"/>
        <dbReference type="ChEBI" id="CHEBI:456216"/>
        <dbReference type="EC" id="2.7.11.1"/>
    </reaction>
</comment>
<comment type="catalytic activity">
    <reaction evidence="11">
        <text>L-threonyl-[protein] + ATP = O-phospho-L-threonyl-[protein] + ADP + H(+)</text>
        <dbReference type="Rhea" id="RHEA:46608"/>
        <dbReference type="Rhea" id="RHEA-COMP:11060"/>
        <dbReference type="Rhea" id="RHEA-COMP:11605"/>
        <dbReference type="ChEBI" id="CHEBI:15378"/>
        <dbReference type="ChEBI" id="CHEBI:30013"/>
        <dbReference type="ChEBI" id="CHEBI:30616"/>
        <dbReference type="ChEBI" id="CHEBI:61977"/>
        <dbReference type="ChEBI" id="CHEBI:456216"/>
        <dbReference type="EC" id="2.7.11.1"/>
    </reaction>
</comment>
<comment type="subunit">
    <text evidence="6">Interacts with the Xanthomonas campestris effector XopAC/AvrAC.</text>
</comment>
<comment type="subcellular location">
    <subcellularLocation>
        <location evidence="1">Cell membrane</location>
        <topology evidence="1">Lipid-anchor</topology>
    </subcellularLocation>
</comment>
<comment type="alternative products">
    <event type="alternative splicing"/>
    <isoform>
        <id>P46573-1</id>
        <name>1</name>
        <sequence type="displayed"/>
    </isoform>
    <text>A number of isoforms are produced. According to EST sequences.</text>
</comment>
<comment type="tissue specificity">
    <text evidence="7">Expressed in stomatal guard cells of leaves.</text>
</comment>
<comment type="disruption phenotype">
    <text evidence="7">No visible phenotype under normal growth conditions. Leaves of well-watered mutant plants have increased relative water content due to decreased stomata opening.</text>
</comment>
<comment type="similarity">
    <text evidence="4">Belongs to the protein kinase superfamily. Ser/Thr protein kinase family.</text>
</comment>